<protein>
    <recommendedName>
        <fullName evidence="1">Mitochondrial distribution and morphology protein 10</fullName>
    </recommendedName>
    <alternativeName>
        <fullName evidence="1">Mitochondrial inheritance component mdm10</fullName>
    </alternativeName>
</protein>
<name>MDM10_ASPNC</name>
<dbReference type="EMBL" id="AM270324">
    <property type="protein sequence ID" value="CAK42054.1"/>
    <property type="molecule type" value="Genomic_DNA"/>
</dbReference>
<dbReference type="SMR" id="A2R3N6"/>
<dbReference type="EnsemblFungi" id="CAK42054">
    <property type="protein sequence ID" value="CAK42054"/>
    <property type="gene ID" value="An14g04930"/>
</dbReference>
<dbReference type="VEuPathDB" id="FungiDB:An14g04930"/>
<dbReference type="HOGENOM" id="CLU_026505_1_0_1"/>
<dbReference type="Proteomes" id="UP000006706">
    <property type="component" value="Chromosome 1R"/>
</dbReference>
<dbReference type="GO" id="GO:0032865">
    <property type="term" value="C:ERMES complex"/>
    <property type="evidence" value="ECO:0007669"/>
    <property type="project" value="UniProtKB-UniRule"/>
</dbReference>
<dbReference type="GO" id="GO:0001401">
    <property type="term" value="C:SAM complex"/>
    <property type="evidence" value="ECO:0007669"/>
    <property type="project" value="TreeGrafter"/>
</dbReference>
<dbReference type="GO" id="GO:0051654">
    <property type="term" value="P:establishment of mitochondrion localization"/>
    <property type="evidence" value="ECO:0007669"/>
    <property type="project" value="TreeGrafter"/>
</dbReference>
<dbReference type="GO" id="GO:0000002">
    <property type="term" value="P:mitochondrial genome maintenance"/>
    <property type="evidence" value="ECO:0007669"/>
    <property type="project" value="UniProtKB-UniRule"/>
</dbReference>
<dbReference type="GO" id="GO:0070096">
    <property type="term" value="P:mitochondrial outer membrane translocase complex assembly"/>
    <property type="evidence" value="ECO:0007669"/>
    <property type="project" value="UniProtKB-UniRule"/>
</dbReference>
<dbReference type="GO" id="GO:1990456">
    <property type="term" value="P:mitochondrion-endoplasmic reticulum membrane tethering"/>
    <property type="evidence" value="ECO:0007669"/>
    <property type="project" value="UniProtKB-UniRule"/>
</dbReference>
<dbReference type="GO" id="GO:0015914">
    <property type="term" value="P:phospholipid transport"/>
    <property type="evidence" value="ECO:0007669"/>
    <property type="project" value="TreeGrafter"/>
</dbReference>
<dbReference type="GO" id="GO:0045040">
    <property type="term" value="P:protein insertion into mitochondrial outer membrane"/>
    <property type="evidence" value="ECO:0007669"/>
    <property type="project" value="UniProtKB-UniRule"/>
</dbReference>
<dbReference type="HAMAP" id="MF_03102">
    <property type="entry name" value="Mdm10"/>
    <property type="match status" value="1"/>
</dbReference>
<dbReference type="InterPro" id="IPR027539">
    <property type="entry name" value="Mdm10"/>
</dbReference>
<dbReference type="PANTHER" id="PTHR28035">
    <property type="entry name" value="MITOCHONDRIAL DISTRIBUTION AND MORPHOLOGY PROTEIN 10"/>
    <property type="match status" value="1"/>
</dbReference>
<dbReference type="PANTHER" id="PTHR28035:SF1">
    <property type="entry name" value="MITOCHONDRIAL DISTRIBUTION AND MORPHOLOGY PROTEIN 10"/>
    <property type="match status" value="1"/>
</dbReference>
<dbReference type="Pfam" id="PF12519">
    <property type="entry name" value="MDM10"/>
    <property type="match status" value="1"/>
</dbReference>
<gene>
    <name type="primary">mdmB</name>
    <name type="synonym">mdm10</name>
    <name type="ORF">An14g04930</name>
</gene>
<feature type="chain" id="PRO_0000384165" description="Mitochondrial distribution and morphology protein 10">
    <location>
        <begin position="1"/>
        <end position="434"/>
    </location>
</feature>
<reference key="1">
    <citation type="journal article" date="2007" name="Nat. Biotechnol.">
        <title>Genome sequencing and analysis of the versatile cell factory Aspergillus niger CBS 513.88.</title>
        <authorList>
            <person name="Pel H.J."/>
            <person name="de Winde J.H."/>
            <person name="Archer D.B."/>
            <person name="Dyer P.S."/>
            <person name="Hofmann G."/>
            <person name="Schaap P.J."/>
            <person name="Turner G."/>
            <person name="de Vries R.P."/>
            <person name="Albang R."/>
            <person name="Albermann K."/>
            <person name="Andersen M.R."/>
            <person name="Bendtsen J.D."/>
            <person name="Benen J.A.E."/>
            <person name="van den Berg M."/>
            <person name="Breestraat S."/>
            <person name="Caddick M.X."/>
            <person name="Contreras R."/>
            <person name="Cornell M."/>
            <person name="Coutinho P.M."/>
            <person name="Danchin E.G.J."/>
            <person name="Debets A.J.M."/>
            <person name="Dekker P."/>
            <person name="van Dijck P.W.M."/>
            <person name="van Dijk A."/>
            <person name="Dijkhuizen L."/>
            <person name="Driessen A.J.M."/>
            <person name="d'Enfert C."/>
            <person name="Geysens S."/>
            <person name="Goosen C."/>
            <person name="Groot G.S.P."/>
            <person name="de Groot P.W.J."/>
            <person name="Guillemette T."/>
            <person name="Henrissat B."/>
            <person name="Herweijer M."/>
            <person name="van den Hombergh J.P.T.W."/>
            <person name="van den Hondel C.A.M.J.J."/>
            <person name="van der Heijden R.T.J.M."/>
            <person name="van der Kaaij R.M."/>
            <person name="Klis F.M."/>
            <person name="Kools H.J."/>
            <person name="Kubicek C.P."/>
            <person name="van Kuyk P.A."/>
            <person name="Lauber J."/>
            <person name="Lu X."/>
            <person name="van der Maarel M.J.E.C."/>
            <person name="Meulenberg R."/>
            <person name="Menke H."/>
            <person name="Mortimer M.A."/>
            <person name="Nielsen J."/>
            <person name="Oliver S.G."/>
            <person name="Olsthoorn M."/>
            <person name="Pal K."/>
            <person name="van Peij N.N.M.E."/>
            <person name="Ram A.F.J."/>
            <person name="Rinas U."/>
            <person name="Roubos J.A."/>
            <person name="Sagt C.M.J."/>
            <person name="Schmoll M."/>
            <person name="Sun J."/>
            <person name="Ussery D."/>
            <person name="Varga J."/>
            <person name="Vervecken W."/>
            <person name="van de Vondervoort P.J.J."/>
            <person name="Wedler H."/>
            <person name="Woesten H.A.B."/>
            <person name="Zeng A.-P."/>
            <person name="van Ooyen A.J.J."/>
            <person name="Visser J."/>
            <person name="Stam H."/>
        </authorList>
    </citation>
    <scope>NUCLEOTIDE SEQUENCE [LARGE SCALE GENOMIC DNA]</scope>
    <source>
        <strain>ATCC MYA-4892 / CBS 513.88 / FGSC A1513</strain>
    </source>
</reference>
<accession>A2R3N6</accession>
<evidence type="ECO:0000255" key="1">
    <source>
        <dbReference type="HAMAP-Rule" id="MF_03102"/>
    </source>
</evidence>
<sequence length="434" mass="48163">MLDFMDYIQLAFAEATNWNRDNSYSSLTATAQSLLDFSTPERLRVHLSSLSTPHFATSYTLGTVGLIDGSVSYLFSTVPLDKFPSRSALIPLRKLSPGYRQVQAPIAPIAETILINDDLNDASAYTTIGKKATLFHATLHLPPPTTLNALFLRRISPTMQLSLAVCSTRGPPLSKSAPQASLLAQLSHNTGKYNNEYLFSTDNALFGWRGLWNFGPDPRDPVASGSSPRLSLLSAGAEAYYSPVSSLIGMSTGLRFSTANANTPISTFPYTLTLTLTPLTGSLSTTYSLRASPNLAFSSRFGFNVYSWESEMVAGCELWRKSKSRYRDDGDGVEWARRKIRESLFPHPHPHLSTSTPNDIKDLAGHALEKSGKGEEEENESVLKIRVDQSWNVRLLWEGRVKELLVLIDRVVEVYSNERCLRELRLMVVFNLDL</sequence>
<proteinExistence type="inferred from homology"/>
<keyword id="KW-0472">Membrane</keyword>
<keyword id="KW-0496">Mitochondrion</keyword>
<keyword id="KW-1000">Mitochondrion outer membrane</keyword>
<keyword id="KW-1185">Reference proteome</keyword>
<keyword id="KW-0812">Transmembrane</keyword>
<keyword id="KW-1134">Transmembrane beta strand</keyword>
<comment type="function">
    <text evidence="1">Component of the ERMES/MDM complex, which serves as a molecular tether to connect the endoplasmic reticulum and mitochondria. Components of this complex are involved in the control of mitochondrial shape and protein biogenesis and may function in phospholipid exchange. mdm10 is involved in the late assembly steps of the general translocase of the mitochondrial outer membrane (TOM complex). Functions in the tom40-specific route of the assembly of outer membrane beta-barrel proteins, including the association of tom40 with the receptor tom22 and small TOM proteins. Can associate with the SAM(core) complex as well as the mdm12-mmm1 complex, both involved in late steps of the major beta-barrel assembly pathway, that is responsible for biogenesis of all outer membrane beta-barrel proteins. May act as a switch that shuttles between both complexes and channels precursor proteins into the tom40-specific pathway. Plays a role in mitochondrial morphology and in the inheritance of mitochondria.</text>
</comment>
<comment type="subunit">
    <text evidence="1">Component of the ER-mitochondria encounter structure (ERMES) or MDM complex, composed of mmm1, mdm10, mdm12 and mdm34. Associates with the mitochondrial outer membrane sorting assembly machinery SAM(core) complex.</text>
</comment>
<comment type="subcellular location">
    <subcellularLocation>
        <location evidence="1">Mitochondrion outer membrane</location>
        <topology evidence="1">Multi-pass membrane protein</topology>
    </subcellularLocation>
    <text evidence="1">The ERMES/MDM complex localizes to a few discrete foci (around 10 per single cell), that represent mitochondria-endoplasmic reticulum junctions. These foci are often found next to mtDNA nucleoids.</text>
</comment>
<comment type="domain">
    <text>Lacks alpha-helical transmembrane segments, suggesting that it resides in the membrane via beta-sheet conformations similar to those predicted for other outer membrane proteins and porin.</text>
</comment>
<comment type="similarity">
    <text evidence="1">Belongs to the MDM10 family.</text>
</comment>
<organism>
    <name type="scientific">Aspergillus niger (strain ATCC MYA-4892 / CBS 513.88 / FGSC A1513)</name>
    <dbReference type="NCBI Taxonomy" id="425011"/>
    <lineage>
        <taxon>Eukaryota</taxon>
        <taxon>Fungi</taxon>
        <taxon>Dikarya</taxon>
        <taxon>Ascomycota</taxon>
        <taxon>Pezizomycotina</taxon>
        <taxon>Eurotiomycetes</taxon>
        <taxon>Eurotiomycetidae</taxon>
        <taxon>Eurotiales</taxon>
        <taxon>Aspergillaceae</taxon>
        <taxon>Aspergillus</taxon>
        <taxon>Aspergillus subgen. Circumdati</taxon>
    </lineage>
</organism>